<proteinExistence type="inferred from homology"/>
<dbReference type="EMBL" id="CP000489">
    <property type="protein sequence ID" value="ABL70395.1"/>
    <property type="molecule type" value="Genomic_DNA"/>
</dbReference>
<dbReference type="RefSeq" id="WP_011748588.1">
    <property type="nucleotide sequence ID" value="NC_008686.1"/>
</dbReference>
<dbReference type="SMR" id="A1B4F1"/>
<dbReference type="STRING" id="318586.Pden_2304"/>
<dbReference type="EnsemblBacteria" id="ABL70395">
    <property type="protein sequence ID" value="ABL70395"/>
    <property type="gene ID" value="Pden_2304"/>
</dbReference>
<dbReference type="GeneID" id="93450700"/>
<dbReference type="KEGG" id="pde:Pden_2304"/>
<dbReference type="eggNOG" id="COG2003">
    <property type="taxonomic scope" value="Bacteria"/>
</dbReference>
<dbReference type="HOGENOM" id="CLU_073529_0_0_5"/>
<dbReference type="OrthoDB" id="9804482at2"/>
<dbReference type="Proteomes" id="UP000000361">
    <property type="component" value="Chromosome 1"/>
</dbReference>
<dbReference type="GO" id="GO:0046872">
    <property type="term" value="F:metal ion binding"/>
    <property type="evidence" value="ECO:0007669"/>
    <property type="project" value="UniProtKB-KW"/>
</dbReference>
<dbReference type="GO" id="GO:0008237">
    <property type="term" value="F:metallopeptidase activity"/>
    <property type="evidence" value="ECO:0007669"/>
    <property type="project" value="UniProtKB-KW"/>
</dbReference>
<dbReference type="GO" id="GO:0006508">
    <property type="term" value="P:proteolysis"/>
    <property type="evidence" value="ECO:0007669"/>
    <property type="project" value="UniProtKB-KW"/>
</dbReference>
<dbReference type="CDD" id="cd08071">
    <property type="entry name" value="MPN_DUF2466"/>
    <property type="match status" value="1"/>
</dbReference>
<dbReference type="Gene3D" id="1.10.150.20">
    <property type="entry name" value="5' to 3' exonuclease, C-terminal subdomain"/>
    <property type="match status" value="1"/>
</dbReference>
<dbReference type="Gene3D" id="3.40.140.10">
    <property type="entry name" value="Cytidine Deaminase, domain 2"/>
    <property type="match status" value="1"/>
</dbReference>
<dbReference type="InterPro" id="IPR037518">
    <property type="entry name" value="MPN"/>
</dbReference>
<dbReference type="InterPro" id="IPR025657">
    <property type="entry name" value="RadC_JAB"/>
</dbReference>
<dbReference type="InterPro" id="IPR010994">
    <property type="entry name" value="RuvA_2-like"/>
</dbReference>
<dbReference type="InterPro" id="IPR001405">
    <property type="entry name" value="UPF0758"/>
</dbReference>
<dbReference type="InterPro" id="IPR020891">
    <property type="entry name" value="UPF0758_CS"/>
</dbReference>
<dbReference type="InterPro" id="IPR046778">
    <property type="entry name" value="UPF0758_N"/>
</dbReference>
<dbReference type="NCBIfam" id="NF000642">
    <property type="entry name" value="PRK00024.1"/>
    <property type="match status" value="1"/>
</dbReference>
<dbReference type="NCBIfam" id="TIGR00608">
    <property type="entry name" value="radc"/>
    <property type="match status" value="1"/>
</dbReference>
<dbReference type="PANTHER" id="PTHR30471">
    <property type="entry name" value="DNA REPAIR PROTEIN RADC"/>
    <property type="match status" value="1"/>
</dbReference>
<dbReference type="PANTHER" id="PTHR30471:SF3">
    <property type="entry name" value="UPF0758 PROTEIN YEES-RELATED"/>
    <property type="match status" value="1"/>
</dbReference>
<dbReference type="Pfam" id="PF04002">
    <property type="entry name" value="RadC"/>
    <property type="match status" value="1"/>
</dbReference>
<dbReference type="Pfam" id="PF20582">
    <property type="entry name" value="UPF0758_N"/>
    <property type="match status" value="1"/>
</dbReference>
<dbReference type="SUPFAM" id="SSF102712">
    <property type="entry name" value="JAB1/MPN domain"/>
    <property type="match status" value="1"/>
</dbReference>
<dbReference type="SUPFAM" id="SSF47781">
    <property type="entry name" value="RuvA domain 2-like"/>
    <property type="match status" value="1"/>
</dbReference>
<dbReference type="PROSITE" id="PS50249">
    <property type="entry name" value="MPN"/>
    <property type="match status" value="1"/>
</dbReference>
<dbReference type="PROSITE" id="PS01302">
    <property type="entry name" value="UPF0758"/>
    <property type="match status" value="1"/>
</dbReference>
<keyword id="KW-0378">Hydrolase</keyword>
<keyword id="KW-0479">Metal-binding</keyword>
<keyword id="KW-0482">Metalloprotease</keyword>
<keyword id="KW-0645">Protease</keyword>
<keyword id="KW-1185">Reference proteome</keyword>
<keyword id="KW-0862">Zinc</keyword>
<gene>
    <name type="ordered locus">Pden_2304</name>
</gene>
<comment type="similarity">
    <text evidence="2">Belongs to the UPF0758 family.</text>
</comment>
<reference key="1">
    <citation type="submission" date="2006-12" db="EMBL/GenBank/DDBJ databases">
        <title>Complete sequence of chromosome 1 of Paracoccus denitrificans PD1222.</title>
        <authorList>
            <person name="Copeland A."/>
            <person name="Lucas S."/>
            <person name="Lapidus A."/>
            <person name="Barry K."/>
            <person name="Detter J.C."/>
            <person name="Glavina del Rio T."/>
            <person name="Hammon N."/>
            <person name="Israni S."/>
            <person name="Dalin E."/>
            <person name="Tice H."/>
            <person name="Pitluck S."/>
            <person name="Munk A.C."/>
            <person name="Brettin T."/>
            <person name="Bruce D."/>
            <person name="Han C."/>
            <person name="Tapia R."/>
            <person name="Gilna P."/>
            <person name="Schmutz J."/>
            <person name="Larimer F."/>
            <person name="Land M."/>
            <person name="Hauser L."/>
            <person name="Kyrpides N."/>
            <person name="Lykidis A."/>
            <person name="Spiro S."/>
            <person name="Richardson D.J."/>
            <person name="Moir J.W.B."/>
            <person name="Ferguson S.J."/>
            <person name="van Spanning R.J.M."/>
            <person name="Richardson P."/>
        </authorList>
    </citation>
    <scope>NUCLEOTIDE SEQUENCE [LARGE SCALE GENOMIC DNA]</scope>
    <source>
        <strain>Pd 1222</strain>
    </source>
</reference>
<sequence length="263" mass="28861">MEPNRAFHEAPLPLFAPAPGSAGDEAPLAGAASVACGTRPPSYIADHRARLRERFMQGGAAAMPDYELLELVLFRAIPRQDVKPLARRLLDRFGDFNRVLSAPPARLAEVSGLGPAVLQELKIVEAAAQRLARSRVMHRPVLTSWDALLDYCHTAMAHGEIEQFRVLYLDRKNVLIADEEQARGTVDHVPVYPREIMRRALELSASALILVHNHPSGDPTPSQADIGMTNRIVAAAEVMGIAVHDHLIIGRSRELSFRSEGLL</sequence>
<accession>A1B4F1</accession>
<protein>
    <recommendedName>
        <fullName>UPF0758 protein Pden_2304</fullName>
    </recommendedName>
</protein>
<organism>
    <name type="scientific">Paracoccus denitrificans (strain Pd 1222)</name>
    <dbReference type="NCBI Taxonomy" id="318586"/>
    <lineage>
        <taxon>Bacteria</taxon>
        <taxon>Pseudomonadati</taxon>
        <taxon>Pseudomonadota</taxon>
        <taxon>Alphaproteobacteria</taxon>
        <taxon>Rhodobacterales</taxon>
        <taxon>Paracoccaceae</taxon>
        <taxon>Paracoccus</taxon>
    </lineage>
</organism>
<name>Y2304_PARDP</name>
<feature type="chain" id="PRO_0000322693" description="UPF0758 protein Pden_2304">
    <location>
        <begin position="1"/>
        <end position="263"/>
    </location>
</feature>
<feature type="domain" description="MPN" evidence="1">
    <location>
        <begin position="141"/>
        <end position="263"/>
    </location>
</feature>
<feature type="short sequence motif" description="JAMM motif" evidence="1">
    <location>
        <begin position="212"/>
        <end position="225"/>
    </location>
</feature>
<feature type="binding site" evidence="1">
    <location>
        <position position="212"/>
    </location>
    <ligand>
        <name>Zn(2+)</name>
        <dbReference type="ChEBI" id="CHEBI:29105"/>
        <note>catalytic</note>
    </ligand>
</feature>
<feature type="binding site" evidence="1">
    <location>
        <position position="214"/>
    </location>
    <ligand>
        <name>Zn(2+)</name>
        <dbReference type="ChEBI" id="CHEBI:29105"/>
        <note>catalytic</note>
    </ligand>
</feature>
<feature type="binding site" evidence="1">
    <location>
        <position position="225"/>
    </location>
    <ligand>
        <name>Zn(2+)</name>
        <dbReference type="ChEBI" id="CHEBI:29105"/>
        <note>catalytic</note>
    </ligand>
</feature>
<evidence type="ECO:0000255" key="1">
    <source>
        <dbReference type="PROSITE-ProRule" id="PRU01182"/>
    </source>
</evidence>
<evidence type="ECO:0000305" key="2"/>